<accession>A1TAR1</accession>
<proteinExistence type="inferred from homology"/>
<name>RIR2H_MYCVP</name>
<comment type="function">
    <text evidence="1">Probable oxidase that might be involved in lipid metabolism.</text>
</comment>
<comment type="cofactor">
    <cofactor evidence="1">
        <name>Fe cation</name>
        <dbReference type="ChEBI" id="CHEBI:24875"/>
    </cofactor>
    <text evidence="1">Binds 1 Fe cation per subunit.</text>
</comment>
<comment type="cofactor">
    <cofactor evidence="1">
        <name>Mn(2+)</name>
        <dbReference type="ChEBI" id="CHEBI:29035"/>
    </cofactor>
    <text evidence="1">Binds 1 manganese ion per subunit. The iron and manganese ions form a dinuclear manganese-iron cluster.</text>
</comment>
<comment type="subunit">
    <text evidence="1">Homodimer.</text>
</comment>
<comment type="similarity">
    <text evidence="2">Belongs to the ribonucleoside diphosphate reductase small chain family. R2-like ligand binding oxidase subfamily.</text>
</comment>
<sequence>MARTRSDSLAAGGLNWDSLPLRLFAGGNAKFWDPADIDFSRDRADWESLTDLERDWATRLCAEFIAGEEAVTQDIQPFMAAMRAEGRLGDEMYLTQFAFEEAKHTQVFRMWLDAVGITEDLQGYLDELPAYCQMFYEELPASLDALATDPSPAAQVRASVTYNHVIEGMMALTGYYAWHRICVDRGILPGMQELVRRIGDDERRHMAWGTFTCRRHVAADDANWAVFETRMNELIPLALRNTEDGFALYDEVPFGLTMEEFQQYAADKGMRRFGTISSARGRPLAEIDVDYSPLHLEDTFADEDRKSLAASA</sequence>
<reference key="1">
    <citation type="submission" date="2006-12" db="EMBL/GenBank/DDBJ databases">
        <title>Complete sequence of Mycobacterium vanbaalenii PYR-1.</title>
        <authorList>
            <consortium name="US DOE Joint Genome Institute"/>
            <person name="Copeland A."/>
            <person name="Lucas S."/>
            <person name="Lapidus A."/>
            <person name="Barry K."/>
            <person name="Detter J.C."/>
            <person name="Glavina del Rio T."/>
            <person name="Hammon N."/>
            <person name="Israni S."/>
            <person name="Dalin E."/>
            <person name="Tice H."/>
            <person name="Pitluck S."/>
            <person name="Singan V."/>
            <person name="Schmutz J."/>
            <person name="Larimer F."/>
            <person name="Land M."/>
            <person name="Hauser L."/>
            <person name="Kyrpides N."/>
            <person name="Anderson I.J."/>
            <person name="Miller C."/>
            <person name="Richardson P."/>
        </authorList>
    </citation>
    <scope>NUCLEOTIDE SEQUENCE [LARGE SCALE GENOMIC DNA]</scope>
    <source>
        <strain>DSM 7251 / JCM 13017 / BCRC 16820 / KCTC 9966 / NRRL B-24157 / PYR-1</strain>
    </source>
</reference>
<gene>
    <name type="ordered locus">Mvan_3466</name>
</gene>
<evidence type="ECO:0000250" key="1">
    <source>
        <dbReference type="UniProtKB" id="P9WH69"/>
    </source>
</evidence>
<evidence type="ECO:0000305" key="2"/>
<protein>
    <recommendedName>
        <fullName evidence="1">R2-like ligand binding oxidase</fullName>
        <ecNumber evidence="1">1.-.-.-</ecNumber>
    </recommendedName>
    <alternativeName>
        <fullName>Ribonucleotide reductase R2 subunit homolog</fullName>
    </alternativeName>
    <alternativeName>
        <fullName>Ribonucleotide reductase small subunit homolog</fullName>
    </alternativeName>
</protein>
<organism>
    <name type="scientific">Mycolicibacterium vanbaalenii (strain DSM 7251 / JCM 13017 / BCRC 16820 / KCTC 9966 / NRRL B-24157 / PYR-1)</name>
    <name type="common">Mycobacterium vanbaalenii</name>
    <dbReference type="NCBI Taxonomy" id="350058"/>
    <lineage>
        <taxon>Bacteria</taxon>
        <taxon>Bacillati</taxon>
        <taxon>Actinomycetota</taxon>
        <taxon>Actinomycetes</taxon>
        <taxon>Mycobacteriales</taxon>
        <taxon>Mycobacteriaceae</taxon>
        <taxon>Mycolicibacterium</taxon>
    </lineage>
</organism>
<keyword id="KW-0408">Iron</keyword>
<keyword id="KW-0464">Manganese</keyword>
<keyword id="KW-0479">Metal-binding</keyword>
<keyword id="KW-0560">Oxidoreductase</keyword>
<feature type="chain" id="PRO_0000375434" description="R2-like ligand binding oxidase">
    <location>
        <begin position="1"/>
        <end position="312"/>
    </location>
</feature>
<feature type="binding site" evidence="1">
    <location>
        <position position="68"/>
    </location>
    <ligand>
        <name>Mn(2+)</name>
        <dbReference type="ChEBI" id="CHEBI:29035"/>
    </ligand>
</feature>
<feature type="binding site" evidence="1">
    <location>
        <position position="101"/>
    </location>
    <ligand>
        <name>Fe cation</name>
        <dbReference type="ChEBI" id="CHEBI:24875"/>
    </ligand>
</feature>
<feature type="binding site" evidence="1">
    <location>
        <position position="101"/>
    </location>
    <ligand>
        <name>Mn(2+)</name>
        <dbReference type="ChEBI" id="CHEBI:29035"/>
    </ligand>
</feature>
<feature type="binding site" evidence="1">
    <location>
        <position position="104"/>
    </location>
    <ligand>
        <name>Mn(2+)</name>
        <dbReference type="ChEBI" id="CHEBI:29035"/>
    </ligand>
</feature>
<feature type="binding site" evidence="1">
    <location>
        <position position="167"/>
    </location>
    <ligand>
        <name>Fe cation</name>
        <dbReference type="ChEBI" id="CHEBI:24875"/>
    </ligand>
</feature>
<feature type="binding site" evidence="1">
    <location>
        <position position="202"/>
    </location>
    <ligand>
        <name>Fe cation</name>
        <dbReference type="ChEBI" id="CHEBI:24875"/>
    </ligand>
</feature>
<feature type="binding site" evidence="1">
    <location>
        <position position="205"/>
    </location>
    <ligand>
        <name>Fe cation</name>
        <dbReference type="ChEBI" id="CHEBI:24875"/>
    </ligand>
</feature>
<feature type="cross-link" description="3-(O4'-tyrosyl)-valine (Val-Tyr)" evidence="1">
    <location>
        <begin position="71"/>
        <end position="162"/>
    </location>
</feature>
<dbReference type="EC" id="1.-.-.-" evidence="1"/>
<dbReference type="EMBL" id="CP000511">
    <property type="protein sequence ID" value="ABM14261.1"/>
    <property type="molecule type" value="Genomic_DNA"/>
</dbReference>
<dbReference type="RefSeq" id="WP_011780665.1">
    <property type="nucleotide sequence ID" value="NZ_JACKSD010000223.1"/>
</dbReference>
<dbReference type="SMR" id="A1TAR1"/>
<dbReference type="STRING" id="350058.Mvan_3466"/>
<dbReference type="KEGG" id="mva:Mvan_3466"/>
<dbReference type="eggNOG" id="COG0208">
    <property type="taxonomic scope" value="Bacteria"/>
</dbReference>
<dbReference type="HOGENOM" id="CLU_072736_0_0_11"/>
<dbReference type="Proteomes" id="UP000009159">
    <property type="component" value="Chromosome"/>
</dbReference>
<dbReference type="GO" id="GO:0046872">
    <property type="term" value="F:metal ion binding"/>
    <property type="evidence" value="ECO:0007669"/>
    <property type="project" value="UniProtKB-KW"/>
</dbReference>
<dbReference type="GO" id="GO:0016491">
    <property type="term" value="F:oxidoreductase activity"/>
    <property type="evidence" value="ECO:0007669"/>
    <property type="project" value="UniProtKB-KW"/>
</dbReference>
<dbReference type="GO" id="GO:0009263">
    <property type="term" value="P:deoxyribonucleotide biosynthetic process"/>
    <property type="evidence" value="ECO:0007669"/>
    <property type="project" value="InterPro"/>
</dbReference>
<dbReference type="CDD" id="cd07911">
    <property type="entry name" value="RNRR2_Rv0233_like"/>
    <property type="match status" value="1"/>
</dbReference>
<dbReference type="Gene3D" id="1.10.620.20">
    <property type="entry name" value="Ribonucleotide Reductase, subunit A"/>
    <property type="match status" value="1"/>
</dbReference>
<dbReference type="InterPro" id="IPR009078">
    <property type="entry name" value="Ferritin-like_SF"/>
</dbReference>
<dbReference type="InterPro" id="IPR033908">
    <property type="entry name" value="R2LOX"/>
</dbReference>
<dbReference type="InterPro" id="IPR012348">
    <property type="entry name" value="RNR-like"/>
</dbReference>
<dbReference type="InterPro" id="IPR000358">
    <property type="entry name" value="RNR_small_fam"/>
</dbReference>
<dbReference type="NCBIfam" id="NF006199">
    <property type="entry name" value="PRK08326.1-2"/>
    <property type="match status" value="1"/>
</dbReference>
<dbReference type="NCBIfam" id="NF006200">
    <property type="entry name" value="PRK08326.1-3"/>
    <property type="match status" value="1"/>
</dbReference>
<dbReference type="NCBIfam" id="NF006201">
    <property type="entry name" value="PRK08326.1-4"/>
    <property type="match status" value="1"/>
</dbReference>
<dbReference type="Pfam" id="PF00268">
    <property type="entry name" value="Ribonuc_red_sm"/>
    <property type="match status" value="1"/>
</dbReference>
<dbReference type="SUPFAM" id="SSF47240">
    <property type="entry name" value="Ferritin-like"/>
    <property type="match status" value="1"/>
</dbReference>